<name>MNMG_HALH5</name>
<protein>
    <recommendedName>
        <fullName evidence="1">tRNA uridine 5-carboxymethylaminomethyl modification enzyme MnmG</fullName>
    </recommendedName>
    <alternativeName>
        <fullName evidence="1">Glucose-inhibited division protein A</fullName>
    </alternativeName>
</protein>
<organism>
    <name type="scientific">Halalkalibacterium halodurans (strain ATCC BAA-125 / DSM 18197 / FERM 7344 / JCM 9153 / C-125)</name>
    <name type="common">Bacillus halodurans</name>
    <dbReference type="NCBI Taxonomy" id="272558"/>
    <lineage>
        <taxon>Bacteria</taxon>
        <taxon>Bacillati</taxon>
        <taxon>Bacillota</taxon>
        <taxon>Bacilli</taxon>
        <taxon>Bacillales</taxon>
        <taxon>Bacillaceae</taxon>
        <taxon>Halalkalibacterium (ex Joshi et al. 2022)</taxon>
    </lineage>
</organism>
<feature type="chain" id="PRO_0000117052" description="tRNA uridine 5-carboxymethylaminomethyl modification enzyme MnmG">
    <location>
        <begin position="1"/>
        <end position="632"/>
    </location>
</feature>
<feature type="binding site" evidence="1">
    <location>
        <begin position="14"/>
        <end position="19"/>
    </location>
    <ligand>
        <name>FAD</name>
        <dbReference type="ChEBI" id="CHEBI:57692"/>
    </ligand>
</feature>
<feature type="binding site" evidence="1">
    <location>
        <position position="126"/>
    </location>
    <ligand>
        <name>FAD</name>
        <dbReference type="ChEBI" id="CHEBI:57692"/>
    </ligand>
</feature>
<feature type="binding site" evidence="1">
    <location>
        <position position="181"/>
    </location>
    <ligand>
        <name>FAD</name>
        <dbReference type="ChEBI" id="CHEBI:57692"/>
    </ligand>
</feature>
<feature type="binding site" evidence="1">
    <location>
        <begin position="273"/>
        <end position="287"/>
    </location>
    <ligand>
        <name>NAD(+)</name>
        <dbReference type="ChEBI" id="CHEBI:57540"/>
    </ligand>
</feature>
<feature type="binding site" evidence="1">
    <location>
        <position position="370"/>
    </location>
    <ligand>
        <name>FAD</name>
        <dbReference type="ChEBI" id="CHEBI:57692"/>
    </ligand>
</feature>
<feature type="sequence conflict" description="In Ref. 1." evidence="2" ref="1">
    <original>EDLDYDAINGLATEAKQKLSEVRPLSVGQASRVSGVNPSDISILLVYLEQGRLAKLGKKTV</original>
    <variation>RRLGLRCD</variation>
    <location>
        <begin position="572"/>
        <end position="632"/>
    </location>
</feature>
<proteinExistence type="inferred from homology"/>
<accession>Q9RCA8</accession>
<accession>Q9K5M7</accession>
<comment type="function">
    <text evidence="1">NAD-binding protein involved in the addition of a carboxymethylaminomethyl (cmnm) group at the wobble position (U34) of certain tRNAs, forming tRNA-cmnm(5)s(2)U34.</text>
</comment>
<comment type="cofactor">
    <cofactor evidence="1">
        <name>FAD</name>
        <dbReference type="ChEBI" id="CHEBI:57692"/>
    </cofactor>
</comment>
<comment type="subunit">
    <text evidence="1">Homodimer. Heterotetramer of two MnmE and two MnmG subunits.</text>
</comment>
<comment type="subcellular location">
    <subcellularLocation>
        <location evidence="1">Cytoplasm</location>
    </subcellularLocation>
</comment>
<comment type="similarity">
    <text evidence="1">Belongs to the MnmG family.</text>
</comment>
<dbReference type="EMBL" id="AB013492">
    <property type="protein sequence ID" value="BAA82679.1"/>
    <property type="molecule type" value="Genomic_DNA"/>
</dbReference>
<dbReference type="EMBL" id="BA000004">
    <property type="protein sequence ID" value="BAB07780.1"/>
    <property type="molecule type" value="Genomic_DNA"/>
</dbReference>
<dbReference type="PIR" id="E84157">
    <property type="entry name" value="E84157"/>
</dbReference>
<dbReference type="RefSeq" id="WP_010900185.1">
    <property type="nucleotide sequence ID" value="NC_002570.2"/>
</dbReference>
<dbReference type="SMR" id="Q9RCA8"/>
<dbReference type="STRING" id="272558.gene:10729979"/>
<dbReference type="GeneID" id="87599644"/>
<dbReference type="KEGG" id="bha:BH4061"/>
<dbReference type="eggNOG" id="COG0445">
    <property type="taxonomic scope" value="Bacteria"/>
</dbReference>
<dbReference type="HOGENOM" id="CLU_007831_2_2_9"/>
<dbReference type="OrthoDB" id="9815560at2"/>
<dbReference type="Proteomes" id="UP000001258">
    <property type="component" value="Chromosome"/>
</dbReference>
<dbReference type="GO" id="GO:0005829">
    <property type="term" value="C:cytosol"/>
    <property type="evidence" value="ECO:0007669"/>
    <property type="project" value="TreeGrafter"/>
</dbReference>
<dbReference type="GO" id="GO:0050660">
    <property type="term" value="F:flavin adenine dinucleotide binding"/>
    <property type="evidence" value="ECO:0007669"/>
    <property type="project" value="UniProtKB-UniRule"/>
</dbReference>
<dbReference type="GO" id="GO:0030488">
    <property type="term" value="P:tRNA methylation"/>
    <property type="evidence" value="ECO:0007669"/>
    <property type="project" value="TreeGrafter"/>
</dbReference>
<dbReference type="GO" id="GO:0002098">
    <property type="term" value="P:tRNA wobble uridine modification"/>
    <property type="evidence" value="ECO:0007669"/>
    <property type="project" value="InterPro"/>
</dbReference>
<dbReference type="FunFam" id="1.10.10.1800:FF:000001">
    <property type="entry name" value="tRNA uridine 5-carboxymethylaminomethyl modification enzyme MnmG"/>
    <property type="match status" value="1"/>
</dbReference>
<dbReference type="FunFam" id="1.10.150.570:FF:000001">
    <property type="entry name" value="tRNA uridine 5-carboxymethylaminomethyl modification enzyme MnmG"/>
    <property type="match status" value="1"/>
</dbReference>
<dbReference type="FunFam" id="3.50.50.60:FF:000002">
    <property type="entry name" value="tRNA uridine 5-carboxymethylaminomethyl modification enzyme MnmG"/>
    <property type="match status" value="1"/>
</dbReference>
<dbReference type="FunFam" id="3.50.50.60:FF:000063">
    <property type="entry name" value="tRNA uridine 5-carboxymethylaminomethyl modification enzyme MnmG"/>
    <property type="match status" value="1"/>
</dbReference>
<dbReference type="Gene3D" id="3.50.50.60">
    <property type="entry name" value="FAD/NAD(P)-binding domain"/>
    <property type="match status" value="2"/>
</dbReference>
<dbReference type="Gene3D" id="1.10.150.570">
    <property type="entry name" value="GidA associated domain, C-terminal subdomain"/>
    <property type="match status" value="1"/>
</dbReference>
<dbReference type="Gene3D" id="1.10.10.1800">
    <property type="entry name" value="tRNA uridine 5-carboxymethylaminomethyl modification enzyme MnmG/GidA"/>
    <property type="match status" value="1"/>
</dbReference>
<dbReference type="HAMAP" id="MF_00129">
    <property type="entry name" value="MnmG_GidA"/>
    <property type="match status" value="1"/>
</dbReference>
<dbReference type="InterPro" id="IPR036188">
    <property type="entry name" value="FAD/NAD-bd_sf"/>
</dbReference>
<dbReference type="InterPro" id="IPR049312">
    <property type="entry name" value="GIDA_C_N"/>
</dbReference>
<dbReference type="InterPro" id="IPR004416">
    <property type="entry name" value="MnmG"/>
</dbReference>
<dbReference type="InterPro" id="IPR002218">
    <property type="entry name" value="MnmG-rel"/>
</dbReference>
<dbReference type="InterPro" id="IPR020595">
    <property type="entry name" value="MnmG-rel_CS"/>
</dbReference>
<dbReference type="InterPro" id="IPR026904">
    <property type="entry name" value="MnmG_C"/>
</dbReference>
<dbReference type="InterPro" id="IPR047001">
    <property type="entry name" value="MnmG_C_subdom"/>
</dbReference>
<dbReference type="InterPro" id="IPR044920">
    <property type="entry name" value="MnmG_C_subdom_sf"/>
</dbReference>
<dbReference type="InterPro" id="IPR040131">
    <property type="entry name" value="MnmG_N"/>
</dbReference>
<dbReference type="NCBIfam" id="TIGR00136">
    <property type="entry name" value="mnmG_gidA"/>
    <property type="match status" value="1"/>
</dbReference>
<dbReference type="PANTHER" id="PTHR11806">
    <property type="entry name" value="GLUCOSE INHIBITED DIVISION PROTEIN A"/>
    <property type="match status" value="1"/>
</dbReference>
<dbReference type="PANTHER" id="PTHR11806:SF0">
    <property type="entry name" value="PROTEIN MTO1 HOMOLOG, MITOCHONDRIAL"/>
    <property type="match status" value="1"/>
</dbReference>
<dbReference type="Pfam" id="PF01134">
    <property type="entry name" value="GIDA"/>
    <property type="match status" value="1"/>
</dbReference>
<dbReference type="Pfam" id="PF21680">
    <property type="entry name" value="GIDA_C_1st"/>
    <property type="match status" value="1"/>
</dbReference>
<dbReference type="Pfam" id="PF13932">
    <property type="entry name" value="SAM_GIDA_C"/>
    <property type="match status" value="1"/>
</dbReference>
<dbReference type="PRINTS" id="PR00411">
    <property type="entry name" value="PNDRDTASEI"/>
</dbReference>
<dbReference type="SMART" id="SM01228">
    <property type="entry name" value="GIDA_assoc_3"/>
    <property type="match status" value="1"/>
</dbReference>
<dbReference type="SUPFAM" id="SSF51905">
    <property type="entry name" value="FAD/NAD(P)-binding domain"/>
    <property type="match status" value="1"/>
</dbReference>
<dbReference type="PROSITE" id="PS01280">
    <property type="entry name" value="GIDA_1"/>
    <property type="match status" value="1"/>
</dbReference>
<dbReference type="PROSITE" id="PS01281">
    <property type="entry name" value="GIDA_2"/>
    <property type="match status" value="1"/>
</dbReference>
<keyword id="KW-0963">Cytoplasm</keyword>
<keyword id="KW-0274">FAD</keyword>
<keyword id="KW-0285">Flavoprotein</keyword>
<keyword id="KW-0520">NAD</keyword>
<keyword id="KW-1185">Reference proteome</keyword>
<keyword id="KW-0819">tRNA processing</keyword>
<gene>
    <name evidence="1" type="primary">mnmG</name>
    <name evidence="1" type="synonym">gidA</name>
    <name type="ordered locus">BH4061</name>
</gene>
<reference key="1">
    <citation type="journal article" date="1999" name="Biosci. Biotechnol. Biochem.">
        <title>Replication origin region of the chromosome of alkaliphilic Bacillus halodurans C-125.</title>
        <authorList>
            <person name="Takami H."/>
            <person name="Masui N."/>
            <person name="Nakasone K."/>
            <person name="Horikoshi K."/>
        </authorList>
    </citation>
    <scope>NUCLEOTIDE SEQUENCE [GENOMIC DNA]</scope>
    <source>
        <strain>ATCC BAA-125 / DSM 18197 / FERM 7344 / JCM 9153 / C-125</strain>
    </source>
</reference>
<reference key="2">
    <citation type="journal article" date="2000" name="Nucleic Acids Res.">
        <title>Complete genome sequence of the alkaliphilic bacterium Bacillus halodurans and genomic sequence comparison with Bacillus subtilis.</title>
        <authorList>
            <person name="Takami H."/>
            <person name="Nakasone K."/>
            <person name="Takaki Y."/>
            <person name="Maeno G."/>
            <person name="Sasaki R."/>
            <person name="Masui N."/>
            <person name="Fuji F."/>
            <person name="Hirama C."/>
            <person name="Nakamura Y."/>
            <person name="Ogasawara N."/>
            <person name="Kuhara S."/>
            <person name="Horikoshi K."/>
        </authorList>
    </citation>
    <scope>NUCLEOTIDE SEQUENCE [LARGE SCALE GENOMIC DNA]</scope>
    <source>
        <strain>ATCC BAA-125 / DSM 18197 / FERM 7344 / JCM 9153 / C-125</strain>
    </source>
</reference>
<evidence type="ECO:0000255" key="1">
    <source>
        <dbReference type="HAMAP-Rule" id="MF_00129"/>
    </source>
</evidence>
<evidence type="ECO:0000305" key="2"/>
<sequence>MSYQGGEFDVIVVGAGHAGVEAGLAAARMGANTLMLTLNLDAVAFMPCNPSVGGPAKGIVVREIDALGGEMARNIDKTHIQMRMLNTGKGPAVRALRAQADKFLYQHEMKKTIEEEENLLLRQGMVERLIIEDGECRGVITNTGAEYRAKAVVVTTGTYLRGKIIIGDLAYESGPNNMQPSINLSYHLQELGFEMVRFKTGTPPRVNGETIDYDKTEIQPGDEVPRAFSYETTKYITDQLPCWLTYTGDKTHQIINDNLGRSPMYSGMIEGTGPRYCPSIEDKIVRFNDKPRHQIFLEPEGRHTSEVYVQGLSTSLPEDVQLDVLKSIPGLEKARMMRPGYAIEYDAIVPTQLWPTLETKKVPGLFTAGQINGTSGYEEAAGQGIMAGINAALRVQGKDGLILDRSEAYIGVLIDDLVTKGTNEPYRLLTSRAEYRLLLRHDNADLRLTEKGYEIGLIARERYERFCEKKAQIAAEKKRLESITVKPSKEVNALLEEVGSAPLKEAVQANVFLKRPEVTYEHVAKVIPAPEQELSADVAEQVEIQIKYEGYISKMLQQVERAKKMNDKKIPEDLDYDAINGLATEAKQKLSEVRPLSVGQASRVSGVNPSDISILLVYLEQGRLAKLGKKTV</sequence>